<organism>
    <name type="scientific">Salmonella typhi</name>
    <dbReference type="NCBI Taxonomy" id="90370"/>
    <lineage>
        <taxon>Bacteria</taxon>
        <taxon>Pseudomonadati</taxon>
        <taxon>Pseudomonadota</taxon>
        <taxon>Gammaproteobacteria</taxon>
        <taxon>Enterobacterales</taxon>
        <taxon>Enterobacteriaceae</taxon>
        <taxon>Salmonella</taxon>
    </lineage>
</organism>
<sequence>MKYDLIIIGSGSVGAAAGYYATRAGLKVLMTDAHMPPYQQGSHHGDTRLIRHAYGEGEKYVPLVLRAQTLWDELSTHNEEPIFVRSGVVNLGPADSAFLANVARSAQQWQLNVERLDATALMTRWPEIRVPDNYIGLFEADSGFLRSELAITTWLRLAREAGCAQLFNSPVSHIHHDDNGVTIETSEGCYHASKALISAGTWVKTLVPELPVQPVRKVFAWFKADGRYSTKNRFPAFTGEMPNGDHYYGFPAENDELKIGKHNGGQRIQAPEERKPFAAVASDGAEAFPFLRNVLPGIGGCLHGAACTYDNSPDEDFIIDTLPGHENTLVITGLSGHGFKFAPVLGEIAADFALGKTPSFDLTPFRLSRFSQ</sequence>
<protein>
    <recommendedName>
        <fullName evidence="1">N-methyl-L-tryptophan oxidase</fullName>
        <shortName evidence="1">MTOX</shortName>
        <ecNumber evidence="1">1.5.3.-</ecNumber>
    </recommendedName>
</protein>
<gene>
    <name evidence="1" type="primary">solA</name>
    <name type="ordered locus">STY1198</name>
    <name type="ordered locus">t1760</name>
</gene>
<accession>P58524</accession>
<evidence type="ECO:0000255" key="1">
    <source>
        <dbReference type="HAMAP-Rule" id="MF_00515"/>
    </source>
</evidence>
<comment type="function">
    <text evidence="1">Catalyzes the oxidative demethylation of N-methyl-L-tryptophan.</text>
</comment>
<comment type="catalytic activity">
    <reaction evidence="1">
        <text>N(alpha)-methyl-L-tryptophan + O2 + H2O = L-tryptophan + formaldehyde + H2O2</text>
        <dbReference type="Rhea" id="RHEA:28006"/>
        <dbReference type="ChEBI" id="CHEBI:15377"/>
        <dbReference type="ChEBI" id="CHEBI:15379"/>
        <dbReference type="ChEBI" id="CHEBI:16240"/>
        <dbReference type="ChEBI" id="CHEBI:16842"/>
        <dbReference type="ChEBI" id="CHEBI:57283"/>
        <dbReference type="ChEBI" id="CHEBI:57912"/>
    </reaction>
</comment>
<comment type="cofactor">
    <cofactor evidence="1">
        <name>FAD</name>
        <dbReference type="ChEBI" id="CHEBI:57692"/>
    </cofactor>
    <text evidence="1">Binds 1 FAD per subunit.</text>
</comment>
<comment type="subunit">
    <text evidence="1">Monomer.</text>
</comment>
<comment type="similarity">
    <text evidence="1">Belongs to the MSOX/MTOX family. MTOX subfamily.</text>
</comment>
<feature type="chain" id="PRO_0000213768" description="N-methyl-L-tryptophan oxidase">
    <location>
        <begin position="1"/>
        <end position="372"/>
    </location>
</feature>
<feature type="binding site" evidence="1">
    <location>
        <begin position="4"/>
        <end position="34"/>
    </location>
    <ligand>
        <name>FAD</name>
        <dbReference type="ChEBI" id="CHEBI:57692"/>
    </ligand>
</feature>
<feature type="modified residue" description="S-8alpha-FAD cysteine" evidence="1">
    <location>
        <position position="307"/>
    </location>
</feature>
<keyword id="KW-0274">FAD</keyword>
<keyword id="KW-0285">Flavoprotein</keyword>
<keyword id="KW-0560">Oxidoreductase</keyword>
<proteinExistence type="inferred from homology"/>
<reference key="1">
    <citation type="journal article" date="2001" name="Nature">
        <title>Complete genome sequence of a multiple drug resistant Salmonella enterica serovar Typhi CT18.</title>
        <authorList>
            <person name="Parkhill J."/>
            <person name="Dougan G."/>
            <person name="James K.D."/>
            <person name="Thomson N.R."/>
            <person name="Pickard D."/>
            <person name="Wain J."/>
            <person name="Churcher C.M."/>
            <person name="Mungall K.L."/>
            <person name="Bentley S.D."/>
            <person name="Holden M.T.G."/>
            <person name="Sebaihia M."/>
            <person name="Baker S."/>
            <person name="Basham D."/>
            <person name="Brooks K."/>
            <person name="Chillingworth T."/>
            <person name="Connerton P."/>
            <person name="Cronin A."/>
            <person name="Davis P."/>
            <person name="Davies R.M."/>
            <person name="Dowd L."/>
            <person name="White N."/>
            <person name="Farrar J."/>
            <person name="Feltwell T."/>
            <person name="Hamlin N."/>
            <person name="Haque A."/>
            <person name="Hien T.T."/>
            <person name="Holroyd S."/>
            <person name="Jagels K."/>
            <person name="Krogh A."/>
            <person name="Larsen T.S."/>
            <person name="Leather S."/>
            <person name="Moule S."/>
            <person name="O'Gaora P."/>
            <person name="Parry C."/>
            <person name="Quail M.A."/>
            <person name="Rutherford K.M."/>
            <person name="Simmonds M."/>
            <person name="Skelton J."/>
            <person name="Stevens K."/>
            <person name="Whitehead S."/>
            <person name="Barrell B.G."/>
        </authorList>
    </citation>
    <scope>NUCLEOTIDE SEQUENCE [LARGE SCALE GENOMIC DNA]</scope>
    <source>
        <strain>CT18</strain>
    </source>
</reference>
<reference key="2">
    <citation type="journal article" date="2003" name="J. Bacteriol.">
        <title>Comparative genomics of Salmonella enterica serovar Typhi strains Ty2 and CT18.</title>
        <authorList>
            <person name="Deng W."/>
            <person name="Liou S.-R."/>
            <person name="Plunkett G. III"/>
            <person name="Mayhew G.F."/>
            <person name="Rose D.J."/>
            <person name="Burland V."/>
            <person name="Kodoyianni V."/>
            <person name="Schwartz D.C."/>
            <person name="Blattner F.R."/>
        </authorList>
    </citation>
    <scope>NUCLEOTIDE SEQUENCE [LARGE SCALE GENOMIC DNA]</scope>
    <source>
        <strain>ATCC 700931 / Ty2</strain>
    </source>
</reference>
<dbReference type="EC" id="1.5.3.-" evidence="1"/>
<dbReference type="EMBL" id="AL513382">
    <property type="protein sequence ID" value="CAD08284.1"/>
    <property type="molecule type" value="Genomic_DNA"/>
</dbReference>
<dbReference type="EMBL" id="AE014613">
    <property type="protein sequence ID" value="AAO69384.1"/>
    <property type="molecule type" value="Genomic_DNA"/>
</dbReference>
<dbReference type="RefSeq" id="NP_455653.1">
    <property type="nucleotide sequence ID" value="NC_003198.1"/>
</dbReference>
<dbReference type="RefSeq" id="WP_000872781.1">
    <property type="nucleotide sequence ID" value="NZ_WSUR01000018.1"/>
</dbReference>
<dbReference type="SMR" id="P58524"/>
<dbReference type="STRING" id="220341.gene:17585164"/>
<dbReference type="KEGG" id="stt:t1760"/>
<dbReference type="KEGG" id="sty:STY1198"/>
<dbReference type="PATRIC" id="fig|220341.7.peg.1200"/>
<dbReference type="eggNOG" id="COG0665">
    <property type="taxonomic scope" value="Bacteria"/>
</dbReference>
<dbReference type="HOGENOM" id="CLU_007884_2_1_6"/>
<dbReference type="OMA" id="WPMLWAH"/>
<dbReference type="OrthoDB" id="9806257at2"/>
<dbReference type="Proteomes" id="UP000000541">
    <property type="component" value="Chromosome"/>
</dbReference>
<dbReference type="Proteomes" id="UP000002670">
    <property type="component" value="Chromosome"/>
</dbReference>
<dbReference type="GO" id="GO:0005829">
    <property type="term" value="C:cytosol"/>
    <property type="evidence" value="ECO:0007669"/>
    <property type="project" value="TreeGrafter"/>
</dbReference>
<dbReference type="GO" id="GO:0050660">
    <property type="term" value="F:flavin adenine dinucleotide binding"/>
    <property type="evidence" value="ECO:0007669"/>
    <property type="project" value="InterPro"/>
</dbReference>
<dbReference type="GO" id="GO:0050131">
    <property type="term" value="F:N-methyl-L-amino-acid oxidase activity"/>
    <property type="evidence" value="ECO:0007669"/>
    <property type="project" value="InterPro"/>
</dbReference>
<dbReference type="GO" id="GO:0008115">
    <property type="term" value="F:sarcosine oxidase activity"/>
    <property type="evidence" value="ECO:0007669"/>
    <property type="project" value="TreeGrafter"/>
</dbReference>
<dbReference type="Gene3D" id="3.30.9.10">
    <property type="entry name" value="D-Amino Acid Oxidase, subunit A, domain 2"/>
    <property type="match status" value="1"/>
</dbReference>
<dbReference type="Gene3D" id="3.50.50.60">
    <property type="entry name" value="FAD/NAD(P)-binding domain"/>
    <property type="match status" value="1"/>
</dbReference>
<dbReference type="HAMAP" id="MF_00515">
    <property type="entry name" value="MTOX"/>
    <property type="match status" value="1"/>
</dbReference>
<dbReference type="InterPro" id="IPR006076">
    <property type="entry name" value="FAD-dep_OxRdtase"/>
</dbReference>
<dbReference type="InterPro" id="IPR036188">
    <property type="entry name" value="FAD/NAD-bd_sf"/>
</dbReference>
<dbReference type="InterPro" id="IPR023493">
    <property type="entry name" value="Me_Trp_Oxase_MTOX"/>
</dbReference>
<dbReference type="InterPro" id="IPR045170">
    <property type="entry name" value="MTOX"/>
</dbReference>
<dbReference type="NCBIfam" id="NF008425">
    <property type="entry name" value="PRK11259.1"/>
    <property type="match status" value="1"/>
</dbReference>
<dbReference type="PANTHER" id="PTHR10961:SF7">
    <property type="entry name" value="FAD DEPENDENT OXIDOREDUCTASE DOMAIN-CONTAINING PROTEIN"/>
    <property type="match status" value="1"/>
</dbReference>
<dbReference type="PANTHER" id="PTHR10961">
    <property type="entry name" value="PEROXISOMAL SARCOSINE OXIDASE"/>
    <property type="match status" value="1"/>
</dbReference>
<dbReference type="Pfam" id="PF01266">
    <property type="entry name" value="DAO"/>
    <property type="match status" value="1"/>
</dbReference>
<dbReference type="SUPFAM" id="SSF54373">
    <property type="entry name" value="FAD-linked reductases, C-terminal domain"/>
    <property type="match status" value="1"/>
</dbReference>
<dbReference type="SUPFAM" id="SSF51905">
    <property type="entry name" value="FAD/NAD(P)-binding domain"/>
    <property type="match status" value="1"/>
</dbReference>
<name>MTOX_SALTI</name>